<gene>
    <name evidence="5" type="primary">sphF</name>
    <name type="ORF">AFUB_034480</name>
</gene>
<accession>B0XZV2</accession>
<name>SPHF_ASPFC</name>
<evidence type="ECO:0000255" key="1"/>
<evidence type="ECO:0000256" key="2">
    <source>
        <dbReference type="SAM" id="MobiDB-lite"/>
    </source>
</evidence>
<evidence type="ECO:0000269" key="3">
    <source>
    </source>
</evidence>
<evidence type="ECO:0000269" key="4">
    <source>
    </source>
</evidence>
<evidence type="ECO:0000303" key="5">
    <source>
    </source>
</evidence>
<comment type="function">
    <text evidence="4">Ketoreductase; part of the gene cluster that mediates the biosynthesis of sphingofungins, bioactive molecules acting as sphingolipid inhibitors via inhibiting serine palmitoyl transferase (SPT) (PubMed:35023724). Within the pathway, sphF catalyzes the reduction of the C-3 ketone of 3-keto-presphingofungin to produce presphingofungin (PubMed:35023724). Sphingofungin biosynthesis starts with the PKS sphB that produces an C18 polyketide precursor 3-hydroxyoctadeca-4,10-dienoyl-ACP containing one delta-6 desaturation and one delta-12 desaturation. The aminoacyl transferase sphA uses the sphB product to produce 3-keto-presphingofungin by adding an aminomalonate molecule. SphF then reduces the C-3 ketone of 3-keto-presphingofungin which leads to presphingofungin. The cytochrome P450 monooxygenase sphH converts presphingofungin into sphingofungin B1 which is further converted to sphingofungin B by the dioxygenase sphC. SphC is also able to convert presphingofungin into sphingofungin B2. The acetyltransferase sphE acetylates sphingofungin B to produce sphingofungin C, but can also convert sphingofungin B1 into sphingofungin C1 and sphingofungin B2 into sphingofungin C2. Finally, sphingofungin C can be spontaneously converted into sphingofungin D (PubMed:35023724).</text>
</comment>
<comment type="catalytic activity">
    <reaction evidence="4">
        <text>3-oxopresphingofungin + NADPH + 2 H(+) = presphingofungin + NADP(+)</text>
        <dbReference type="Rhea" id="RHEA:81159"/>
        <dbReference type="ChEBI" id="CHEBI:15378"/>
        <dbReference type="ChEBI" id="CHEBI:57783"/>
        <dbReference type="ChEBI" id="CHEBI:58349"/>
        <dbReference type="ChEBI" id="CHEBI:231804"/>
        <dbReference type="ChEBI" id="CHEBI:231805"/>
    </reaction>
    <physiologicalReaction direction="left-to-right" evidence="4">
        <dbReference type="Rhea" id="RHEA:81160"/>
    </physiologicalReaction>
</comment>
<comment type="pathway">
    <text evidence="4">Secondary metabolite biosynthesis.</text>
</comment>
<comment type="subcellular location">
    <subcellularLocation>
        <location evidence="1">Membrane</location>
        <topology evidence="1">Single-pass membrane protein</topology>
    </subcellularLocation>
</comment>
<comment type="induction">
    <text evidence="4">Expression is positively regulated by the sphingofungins biosynthesis cluster-specific transcription factor sphG.</text>
</comment>
<comment type="disruption phenotype">
    <text evidence="4">Impairs sphingofungin production but accumulates decarboxy-3-keto-presphingofungin which is formed by the spontaneous decarboxylation of 3-keto-presphingofungin, the product of sphA.</text>
</comment>
<comment type="biotechnology">
    <text evidence="3">The sphingofungins A, B, C, and D, show a limited antifungal spectrum of activity but are especially effective against Cryptococcus species, fungal pathogens causing opportunistic infections in human.</text>
</comment>
<keyword id="KW-0472">Membrane</keyword>
<keyword id="KW-0560">Oxidoreductase</keyword>
<keyword id="KW-0812">Transmembrane</keyword>
<keyword id="KW-1133">Transmembrane helix</keyword>
<organism>
    <name type="scientific">Aspergillus fumigatus (strain CBS 144.89 / FGSC A1163 / CEA10)</name>
    <name type="common">Neosartorya fumigata</name>
    <dbReference type="NCBI Taxonomy" id="451804"/>
    <lineage>
        <taxon>Eukaryota</taxon>
        <taxon>Fungi</taxon>
        <taxon>Dikarya</taxon>
        <taxon>Ascomycota</taxon>
        <taxon>Pezizomycotina</taxon>
        <taxon>Eurotiomycetes</taxon>
        <taxon>Eurotiomycetidae</taxon>
        <taxon>Eurotiales</taxon>
        <taxon>Aspergillaceae</taxon>
        <taxon>Aspergillus</taxon>
        <taxon>Aspergillus subgen. Fumigati</taxon>
    </lineage>
</organism>
<proteinExistence type="evidence at protein level"/>
<reference key="1">
    <citation type="journal article" date="2008" name="PLoS Genet.">
        <title>Genomic islands in the pathogenic filamentous fungus Aspergillus fumigatus.</title>
        <authorList>
            <person name="Fedorova N.D."/>
            <person name="Khaldi N."/>
            <person name="Joardar V.S."/>
            <person name="Maiti R."/>
            <person name="Amedeo P."/>
            <person name="Anderson M.J."/>
            <person name="Crabtree J."/>
            <person name="Silva J.C."/>
            <person name="Badger J.H."/>
            <person name="Albarraq A."/>
            <person name="Angiuoli S."/>
            <person name="Bussey H."/>
            <person name="Bowyer P."/>
            <person name="Cotty P.J."/>
            <person name="Dyer P.S."/>
            <person name="Egan A."/>
            <person name="Galens K."/>
            <person name="Fraser-Liggett C.M."/>
            <person name="Haas B.J."/>
            <person name="Inman J.M."/>
            <person name="Kent R."/>
            <person name="Lemieux S."/>
            <person name="Malavazi I."/>
            <person name="Orvis J."/>
            <person name="Roemer T."/>
            <person name="Ronning C.M."/>
            <person name="Sundaram J.P."/>
            <person name="Sutton G."/>
            <person name="Turner G."/>
            <person name="Venter J.C."/>
            <person name="White O.R."/>
            <person name="Whitty B.R."/>
            <person name="Youngman P."/>
            <person name="Wolfe K.H."/>
            <person name="Goldman G.H."/>
            <person name="Wortman J.R."/>
            <person name="Jiang B."/>
            <person name="Denning D.W."/>
            <person name="Nierman W.C."/>
        </authorList>
    </citation>
    <scope>NUCLEOTIDE SEQUENCE [LARGE SCALE GENOMIC DNA]</scope>
    <source>
        <strain>CBS 144.89 / FGSC A1163 / CEA10</strain>
    </source>
</reference>
<reference key="2">
    <citation type="journal article" date="1992" name="J. Antibiot.">
        <title>Sphingofungins A, B, C, and D; a new family of antifungal agents. I. Fermentation, isolation, and biological activity.</title>
        <authorList>
            <person name="VanMiddlesworth F."/>
            <person name="Giacobbe R.A."/>
            <person name="Lopez M."/>
            <person name="Garrity G."/>
            <person name="Bland J.A."/>
            <person name="Bartizal K."/>
            <person name="Fromtling R.A."/>
            <person name="Polishook J."/>
            <person name="Zweerink M."/>
            <person name="Edison A.M."/>
        </authorList>
    </citation>
    <scope>BIOTECHNOLOGY</scope>
</reference>
<reference key="3">
    <citation type="journal article" date="2022" name="ACS Chem. Biol.">
        <title>Biosynthesis of the sphingolipid inhibitors sphingofungins in filamentous fungi requires aminomalonate as a metabolic precursor.</title>
        <authorList>
            <person name="Bissell A.U."/>
            <person name="Rautschek J."/>
            <person name="Hoefgen S."/>
            <person name="Raguz L."/>
            <person name="Mattern D.J."/>
            <person name="Saeed N."/>
            <person name="Janevska S."/>
            <person name="Jojic K."/>
            <person name="Huang Y."/>
            <person name="Kufs J.E."/>
            <person name="Herboeck B."/>
            <person name="Guo H."/>
            <person name="Hillmann F."/>
            <person name="Beemelmanns C."/>
            <person name="Valiante V."/>
        </authorList>
    </citation>
    <scope>FUNCTION</scope>
    <scope>INDUCTION</scope>
    <scope>DISRUPTION PHENOTYPE</scope>
    <scope>CATALYTIC ACTIVITY</scope>
    <scope>PATHWAY</scope>
</reference>
<protein>
    <recommendedName>
        <fullName evidence="5">Ketoreductase sphF</fullName>
        <ecNumber evidence="4">1.-.-.-</ecNumber>
    </recommendedName>
    <alternativeName>
        <fullName evidence="5">Sphingofungin biosynthesis cluster protein F</fullName>
    </alternativeName>
</protein>
<sequence>MLERPSFPRLGAGTRHHRPLGQTGEGSDWLLAFTGISGIAGMMIPYVPWGLIRAMQRGSIELTSPRGVWIFNCAILPSRLHRTVERKGNMKPDQDLFGKVYLADCLCDRRLRWLRKSDFQHTCCAWCQCHNIRTTAGPSSRCPERDRGELCGCGPARDRCRGGGYGRCLCGVGRIQIPTPNRGFPVLLRGGKPCRERVFHRSSSHAAGFLHEEQLLFHCVCGQGHVGYLGRGRQEISRHRRVDQRHHWTQTPKDCFRQQRGGVLGATRERCLYARQKRSPSPGRHPALGSPPAQLRQDHLHNPHRLSSRLHLAWVRPRTRHQTGPHEADPGHQRRHFRAAGGEIPVLGESGPGDRCAGRPRGFYYLRGFIGCESFVYEHGWVEPQERTWNCGFVVERGDGVVCGAGVEEEVGEDVQGRCY</sequence>
<dbReference type="EC" id="1.-.-.-" evidence="4"/>
<dbReference type="EMBL" id="DS499596">
    <property type="protein sequence ID" value="EDP52284.1"/>
    <property type="molecule type" value="Genomic_DNA"/>
</dbReference>
<dbReference type="EnsemblFungi" id="EDP52284">
    <property type="protein sequence ID" value="EDP52284"/>
    <property type="gene ID" value="AFUB_034480"/>
</dbReference>
<dbReference type="VEuPathDB" id="FungiDB:AFUB_034480"/>
<dbReference type="HOGENOM" id="CLU_653767_0_0_1"/>
<dbReference type="Proteomes" id="UP000001699">
    <property type="component" value="Unassembled WGS sequence"/>
</dbReference>
<dbReference type="GO" id="GO:0016020">
    <property type="term" value="C:membrane"/>
    <property type="evidence" value="ECO:0007669"/>
    <property type="project" value="UniProtKB-SubCell"/>
</dbReference>
<dbReference type="GO" id="GO:0016491">
    <property type="term" value="F:oxidoreductase activity"/>
    <property type="evidence" value="ECO:0007669"/>
    <property type="project" value="UniProtKB-KW"/>
</dbReference>
<feature type="chain" id="PRO_0000461284" description="Ketoreductase sphF">
    <location>
        <begin position="1"/>
        <end position="420"/>
    </location>
</feature>
<feature type="transmembrane region" description="Helical" evidence="1">
    <location>
        <begin position="29"/>
        <end position="49"/>
    </location>
</feature>
<feature type="region of interest" description="Disordered" evidence="2">
    <location>
        <begin position="1"/>
        <end position="21"/>
    </location>
</feature>
<feature type="region of interest" description="Disordered" evidence="2">
    <location>
        <begin position="275"/>
        <end position="298"/>
    </location>
</feature>